<keyword id="KW-0249">Electron transport</keyword>
<keyword id="KW-0472">Membrane</keyword>
<keyword id="KW-0496">Mitochondrion</keyword>
<keyword id="KW-0999">Mitochondrion inner membrane</keyword>
<keyword id="KW-0520">NAD</keyword>
<keyword id="KW-0679">Respiratory chain</keyword>
<keyword id="KW-1278">Translocase</keyword>
<keyword id="KW-0812">Transmembrane</keyword>
<keyword id="KW-1133">Transmembrane helix</keyword>
<keyword id="KW-0813">Transport</keyword>
<keyword id="KW-0830">Ubiquinone</keyword>
<evidence type="ECO:0000250" key="1"/>
<evidence type="ECO:0000255" key="2"/>
<evidence type="ECO:0000305" key="3"/>
<name>NU2M_MARFT</name>
<feature type="chain" id="PRO_0000117544" description="NADH-ubiquinone oxidoreductase chain 2">
    <location>
        <begin position="1"/>
        <end position="346"/>
    </location>
</feature>
<feature type="transmembrane region" description="Helical" evidence="2">
    <location>
        <begin position="1"/>
        <end position="21"/>
    </location>
</feature>
<feature type="transmembrane region" description="Helical" evidence="2">
    <location>
        <begin position="25"/>
        <end position="45"/>
    </location>
</feature>
<feature type="transmembrane region" description="Helical" evidence="2">
    <location>
        <begin position="60"/>
        <end position="80"/>
    </location>
</feature>
<feature type="transmembrane region" description="Helical" evidence="2">
    <location>
        <begin position="95"/>
        <end position="115"/>
    </location>
</feature>
<feature type="transmembrane region" description="Helical" evidence="2">
    <location>
        <begin position="124"/>
        <end position="144"/>
    </location>
</feature>
<feature type="transmembrane region" description="Helical" evidence="2">
    <location>
        <begin position="149"/>
        <end position="169"/>
    </location>
</feature>
<feature type="transmembrane region" description="Helical" evidence="2">
    <location>
        <begin position="178"/>
        <end position="195"/>
    </location>
</feature>
<feature type="transmembrane region" description="Helical" evidence="2">
    <location>
        <begin position="200"/>
        <end position="219"/>
    </location>
</feature>
<feature type="transmembrane region" description="Helical" evidence="2">
    <location>
        <begin position="242"/>
        <end position="262"/>
    </location>
</feature>
<feature type="transmembrane region" description="Helical" evidence="2">
    <location>
        <begin position="274"/>
        <end position="294"/>
    </location>
</feature>
<feature type="transmembrane region" description="Helical" evidence="2">
    <location>
        <begin position="326"/>
        <end position="346"/>
    </location>
</feature>
<gene>
    <name type="primary">MT-ND2</name>
    <name type="synonym">MTND2</name>
    <name type="synonym">NADH2</name>
    <name type="synonym">ND2</name>
</gene>
<comment type="function">
    <text evidence="1">Core subunit of the mitochondrial membrane respiratory chain NADH dehydrogenase (Complex I) that is believed to belong to the minimal assembly required for catalysis. Complex I functions in the transfer of electrons from NADH to the respiratory chain. The immediate electron acceptor for the enzyme is believed to be ubiquinone (By similarity).</text>
</comment>
<comment type="catalytic activity">
    <reaction>
        <text>a ubiquinone + NADH + 5 H(+)(in) = a ubiquinol + NAD(+) + 4 H(+)(out)</text>
        <dbReference type="Rhea" id="RHEA:29091"/>
        <dbReference type="Rhea" id="RHEA-COMP:9565"/>
        <dbReference type="Rhea" id="RHEA-COMP:9566"/>
        <dbReference type="ChEBI" id="CHEBI:15378"/>
        <dbReference type="ChEBI" id="CHEBI:16389"/>
        <dbReference type="ChEBI" id="CHEBI:17976"/>
        <dbReference type="ChEBI" id="CHEBI:57540"/>
        <dbReference type="ChEBI" id="CHEBI:57945"/>
        <dbReference type="EC" id="7.1.1.2"/>
    </reaction>
</comment>
<comment type="subcellular location">
    <subcellularLocation>
        <location>Mitochondrion inner membrane</location>
        <topology>Multi-pass membrane protein</topology>
    </subcellularLocation>
</comment>
<comment type="similarity">
    <text evidence="3">Belongs to the complex I subunit 2 family.</text>
</comment>
<accession>O63797</accession>
<sequence>MNPHATPVLVLSLALGTTITISSNHWVLAWTGLEINTLAIIPLISKSHHPRAVEAATKYFLTQAAASALVLFSSMTNAWATGQWDITQLNHPTSCLLLTAAIAIKLGLVPFHFWFPEVLQGSPLMTALLLSTLMKFPPLTLLLMTSKSLNPALLTTMALASAALGGWMGLNQTQTRKILAFSSISHLGWIAIILVYSPKLALLTFYLYAIMTSAVFMALNKIKALNLSMVLTSWTKTPVLNATLMLVLLSLAGLPPLTGFMPKWLIIQELTKQEMTPAAMAIAMLSLLSLFFYLRLAYHSTITLPPNSSNHMKQWYTSKPPSTPTAILASLSILLLPLSPMIHAIV</sequence>
<protein>
    <recommendedName>
        <fullName>NADH-ubiquinone oxidoreductase chain 2</fullName>
        <ecNumber>7.1.1.2</ecNumber>
    </recommendedName>
    <alternativeName>
        <fullName>NADH dehydrogenase subunit 2</fullName>
    </alternativeName>
</protein>
<proteinExistence type="inferred from homology"/>
<dbReference type="EC" id="7.1.1.2"/>
<dbReference type="EMBL" id="AF059166">
    <property type="protein sequence ID" value="AAC14860.1"/>
    <property type="molecule type" value="Genomic_DNA"/>
</dbReference>
<dbReference type="SMR" id="O63797"/>
<dbReference type="GO" id="GO:0005743">
    <property type="term" value="C:mitochondrial inner membrane"/>
    <property type="evidence" value="ECO:0007669"/>
    <property type="project" value="UniProtKB-SubCell"/>
</dbReference>
<dbReference type="GO" id="GO:0008137">
    <property type="term" value="F:NADH dehydrogenase (ubiquinone) activity"/>
    <property type="evidence" value="ECO:0007669"/>
    <property type="project" value="UniProtKB-EC"/>
</dbReference>
<dbReference type="GO" id="GO:0006120">
    <property type="term" value="P:mitochondrial electron transport, NADH to ubiquinone"/>
    <property type="evidence" value="ECO:0007669"/>
    <property type="project" value="InterPro"/>
</dbReference>
<dbReference type="InterPro" id="IPR050175">
    <property type="entry name" value="Complex_I_Subunit_2"/>
</dbReference>
<dbReference type="InterPro" id="IPR010933">
    <property type="entry name" value="NADH_DH_su2_C"/>
</dbReference>
<dbReference type="InterPro" id="IPR003917">
    <property type="entry name" value="NADH_UbQ_OxRdtase_chain2"/>
</dbReference>
<dbReference type="InterPro" id="IPR001750">
    <property type="entry name" value="ND/Mrp_TM"/>
</dbReference>
<dbReference type="PANTHER" id="PTHR46552">
    <property type="entry name" value="NADH-UBIQUINONE OXIDOREDUCTASE CHAIN 2"/>
    <property type="match status" value="1"/>
</dbReference>
<dbReference type="PANTHER" id="PTHR46552:SF1">
    <property type="entry name" value="NADH-UBIQUINONE OXIDOREDUCTASE CHAIN 2"/>
    <property type="match status" value="1"/>
</dbReference>
<dbReference type="Pfam" id="PF06444">
    <property type="entry name" value="NADH_dehy_S2_C"/>
    <property type="match status" value="1"/>
</dbReference>
<dbReference type="Pfam" id="PF00361">
    <property type="entry name" value="Proton_antipo_M"/>
    <property type="match status" value="1"/>
</dbReference>
<dbReference type="PRINTS" id="PR01436">
    <property type="entry name" value="NADHDHGNASE2"/>
</dbReference>
<reference key="1">
    <citation type="journal article" date="1998" name="Mol. Phylogenet. Evol.">
        <title>Comparing molecular evolution in two mitochondrial protein coding genes (cytochrome b and ND2) in the dabbling ducks (Tribe: Anatini).</title>
        <authorList>
            <person name="Johnson K.P."/>
            <person name="Sorenson M.D."/>
        </authorList>
    </citation>
    <scope>NUCLEOTIDE SEQUENCE [GENOMIC DNA]</scope>
</reference>
<geneLocation type="mitochondrion"/>
<organism>
    <name type="scientific">Mareca falcata</name>
    <name type="common">Falcated duck</name>
    <name type="synonym">Anas falcata</name>
    <dbReference type="NCBI Taxonomy" id="75844"/>
    <lineage>
        <taxon>Eukaryota</taxon>
        <taxon>Metazoa</taxon>
        <taxon>Chordata</taxon>
        <taxon>Craniata</taxon>
        <taxon>Vertebrata</taxon>
        <taxon>Euteleostomi</taxon>
        <taxon>Archelosauria</taxon>
        <taxon>Archosauria</taxon>
        <taxon>Dinosauria</taxon>
        <taxon>Saurischia</taxon>
        <taxon>Theropoda</taxon>
        <taxon>Coelurosauria</taxon>
        <taxon>Aves</taxon>
        <taxon>Neognathae</taxon>
        <taxon>Galloanserae</taxon>
        <taxon>Anseriformes</taxon>
        <taxon>Anatidae</taxon>
        <taxon>Anatinae</taxon>
        <taxon>Mareca</taxon>
    </lineage>
</organism>